<reference key="1">
    <citation type="submission" date="2006-03" db="EMBL/GenBank/DDBJ databases">
        <title>Complete sequence of Methylobacillus flagellatus KT.</title>
        <authorList>
            <consortium name="US DOE Joint Genome Institute"/>
            <person name="Copeland A."/>
            <person name="Lucas S."/>
            <person name="Lapidus A."/>
            <person name="Barry K."/>
            <person name="Detter J.C."/>
            <person name="Glavina del Rio T."/>
            <person name="Hammon N."/>
            <person name="Israni S."/>
            <person name="Dalin E."/>
            <person name="Tice H."/>
            <person name="Pitluck S."/>
            <person name="Brettin T."/>
            <person name="Bruce D."/>
            <person name="Han C."/>
            <person name="Tapia R."/>
            <person name="Saunders E."/>
            <person name="Gilna P."/>
            <person name="Schmutz J."/>
            <person name="Larimer F."/>
            <person name="Land M."/>
            <person name="Kyrpides N."/>
            <person name="Anderson I."/>
            <person name="Richardson P."/>
        </authorList>
    </citation>
    <scope>NUCLEOTIDE SEQUENCE [LARGE SCALE GENOMIC DNA]</scope>
    <source>
        <strain>ATCC 51484 / DSM 6875 / VKM B-1610 / KT</strain>
    </source>
</reference>
<gene>
    <name evidence="1" type="primary">rpmC</name>
    <name type="ordered locus">Mfla_0287</name>
</gene>
<dbReference type="EMBL" id="CP000284">
    <property type="protein sequence ID" value="ABE48558.1"/>
    <property type="molecule type" value="Genomic_DNA"/>
</dbReference>
<dbReference type="RefSeq" id="WP_011478655.1">
    <property type="nucleotide sequence ID" value="NC_007947.1"/>
</dbReference>
<dbReference type="SMR" id="Q1H4M9"/>
<dbReference type="STRING" id="265072.Mfla_0287"/>
<dbReference type="KEGG" id="mfa:Mfla_0287"/>
<dbReference type="eggNOG" id="COG0255">
    <property type="taxonomic scope" value="Bacteria"/>
</dbReference>
<dbReference type="HOGENOM" id="CLU_158491_1_1_4"/>
<dbReference type="OrthoDB" id="9815192at2"/>
<dbReference type="Proteomes" id="UP000002440">
    <property type="component" value="Chromosome"/>
</dbReference>
<dbReference type="GO" id="GO:0022625">
    <property type="term" value="C:cytosolic large ribosomal subunit"/>
    <property type="evidence" value="ECO:0007669"/>
    <property type="project" value="TreeGrafter"/>
</dbReference>
<dbReference type="GO" id="GO:0003735">
    <property type="term" value="F:structural constituent of ribosome"/>
    <property type="evidence" value="ECO:0007669"/>
    <property type="project" value="InterPro"/>
</dbReference>
<dbReference type="GO" id="GO:0006412">
    <property type="term" value="P:translation"/>
    <property type="evidence" value="ECO:0007669"/>
    <property type="project" value="UniProtKB-UniRule"/>
</dbReference>
<dbReference type="CDD" id="cd00427">
    <property type="entry name" value="Ribosomal_L29_HIP"/>
    <property type="match status" value="1"/>
</dbReference>
<dbReference type="FunFam" id="1.10.287.310:FF:000001">
    <property type="entry name" value="50S ribosomal protein L29"/>
    <property type="match status" value="1"/>
</dbReference>
<dbReference type="Gene3D" id="1.10.287.310">
    <property type="match status" value="1"/>
</dbReference>
<dbReference type="HAMAP" id="MF_00374">
    <property type="entry name" value="Ribosomal_uL29"/>
    <property type="match status" value="1"/>
</dbReference>
<dbReference type="InterPro" id="IPR050063">
    <property type="entry name" value="Ribosomal_protein_uL29"/>
</dbReference>
<dbReference type="InterPro" id="IPR001854">
    <property type="entry name" value="Ribosomal_uL29"/>
</dbReference>
<dbReference type="InterPro" id="IPR036049">
    <property type="entry name" value="Ribosomal_uL29_sf"/>
</dbReference>
<dbReference type="NCBIfam" id="TIGR00012">
    <property type="entry name" value="L29"/>
    <property type="match status" value="1"/>
</dbReference>
<dbReference type="PANTHER" id="PTHR10916">
    <property type="entry name" value="60S RIBOSOMAL PROTEIN L35/50S RIBOSOMAL PROTEIN L29"/>
    <property type="match status" value="1"/>
</dbReference>
<dbReference type="PANTHER" id="PTHR10916:SF0">
    <property type="entry name" value="LARGE RIBOSOMAL SUBUNIT PROTEIN UL29C"/>
    <property type="match status" value="1"/>
</dbReference>
<dbReference type="Pfam" id="PF00831">
    <property type="entry name" value="Ribosomal_L29"/>
    <property type="match status" value="1"/>
</dbReference>
<dbReference type="SUPFAM" id="SSF46561">
    <property type="entry name" value="Ribosomal protein L29 (L29p)"/>
    <property type="match status" value="1"/>
</dbReference>
<sequence>MKASELRNKTVEELNNELIELRRAQFSLRMQLATQQLNKVDQVGKVRRDIARVRSVLAEKAKAANASQA</sequence>
<comment type="similarity">
    <text evidence="1">Belongs to the universal ribosomal protein uL29 family.</text>
</comment>
<feature type="chain" id="PRO_1000007519" description="Large ribosomal subunit protein uL29">
    <location>
        <begin position="1"/>
        <end position="69"/>
    </location>
</feature>
<keyword id="KW-1185">Reference proteome</keyword>
<keyword id="KW-0687">Ribonucleoprotein</keyword>
<keyword id="KW-0689">Ribosomal protein</keyword>
<name>RL29_METFK</name>
<organism>
    <name type="scientific">Methylobacillus flagellatus (strain ATCC 51484 / DSM 6875 / VKM B-1610 / KT)</name>
    <dbReference type="NCBI Taxonomy" id="265072"/>
    <lineage>
        <taxon>Bacteria</taxon>
        <taxon>Pseudomonadati</taxon>
        <taxon>Pseudomonadota</taxon>
        <taxon>Betaproteobacteria</taxon>
        <taxon>Nitrosomonadales</taxon>
        <taxon>Methylophilaceae</taxon>
        <taxon>Methylobacillus</taxon>
    </lineage>
</organism>
<evidence type="ECO:0000255" key="1">
    <source>
        <dbReference type="HAMAP-Rule" id="MF_00374"/>
    </source>
</evidence>
<evidence type="ECO:0000305" key="2"/>
<protein>
    <recommendedName>
        <fullName evidence="1">Large ribosomal subunit protein uL29</fullName>
    </recommendedName>
    <alternativeName>
        <fullName evidence="2">50S ribosomal protein L29</fullName>
    </alternativeName>
</protein>
<proteinExistence type="inferred from homology"/>
<accession>Q1H4M9</accession>